<gene>
    <name evidence="1" type="primary">sstT</name>
    <name type="ordered locus">AHA_2438</name>
</gene>
<accession>A0KL02</accession>
<evidence type="ECO:0000255" key="1">
    <source>
        <dbReference type="HAMAP-Rule" id="MF_01582"/>
    </source>
</evidence>
<dbReference type="EMBL" id="CP000462">
    <property type="protein sequence ID" value="ABK36651.1"/>
    <property type="molecule type" value="Genomic_DNA"/>
</dbReference>
<dbReference type="RefSeq" id="WP_011706271.1">
    <property type="nucleotide sequence ID" value="NC_008570.1"/>
</dbReference>
<dbReference type="RefSeq" id="YP_856953.1">
    <property type="nucleotide sequence ID" value="NC_008570.1"/>
</dbReference>
<dbReference type="SMR" id="A0KL02"/>
<dbReference type="STRING" id="380703.AHA_2438"/>
<dbReference type="EnsemblBacteria" id="ABK36651">
    <property type="protein sequence ID" value="ABK36651"/>
    <property type="gene ID" value="AHA_2438"/>
</dbReference>
<dbReference type="GeneID" id="4486742"/>
<dbReference type="KEGG" id="aha:AHA_2438"/>
<dbReference type="PATRIC" id="fig|380703.7.peg.2437"/>
<dbReference type="eggNOG" id="COG3633">
    <property type="taxonomic scope" value="Bacteria"/>
</dbReference>
<dbReference type="HOGENOM" id="CLU_044581_0_0_6"/>
<dbReference type="OrthoDB" id="9768885at2"/>
<dbReference type="Proteomes" id="UP000000756">
    <property type="component" value="Chromosome"/>
</dbReference>
<dbReference type="GO" id="GO:0005886">
    <property type="term" value="C:plasma membrane"/>
    <property type="evidence" value="ECO:0007669"/>
    <property type="project" value="UniProtKB-SubCell"/>
</dbReference>
<dbReference type="GO" id="GO:0005295">
    <property type="term" value="F:neutral L-amino acid:sodium symporter activity"/>
    <property type="evidence" value="ECO:0007669"/>
    <property type="project" value="TreeGrafter"/>
</dbReference>
<dbReference type="GO" id="GO:0032329">
    <property type="term" value="P:serine transport"/>
    <property type="evidence" value="ECO:0007669"/>
    <property type="project" value="InterPro"/>
</dbReference>
<dbReference type="GO" id="GO:0015826">
    <property type="term" value="P:threonine transport"/>
    <property type="evidence" value="ECO:0007669"/>
    <property type="project" value="InterPro"/>
</dbReference>
<dbReference type="FunFam" id="1.10.3860.10:FF:000003">
    <property type="entry name" value="Serine/threonine transporter sstT"/>
    <property type="match status" value="1"/>
</dbReference>
<dbReference type="Gene3D" id="1.10.3860.10">
    <property type="entry name" value="Sodium:dicarboxylate symporter"/>
    <property type="match status" value="1"/>
</dbReference>
<dbReference type="HAMAP" id="MF_01582">
    <property type="entry name" value="Ser_Thr_transp_SstT"/>
    <property type="match status" value="1"/>
</dbReference>
<dbReference type="InterPro" id="IPR001991">
    <property type="entry name" value="Na-dicarboxylate_symporter"/>
</dbReference>
<dbReference type="InterPro" id="IPR036458">
    <property type="entry name" value="Na:dicarbo_symporter_sf"/>
</dbReference>
<dbReference type="InterPro" id="IPR023025">
    <property type="entry name" value="Ser_Thr_transp_SstT"/>
</dbReference>
<dbReference type="NCBIfam" id="NF010151">
    <property type="entry name" value="PRK13628.1"/>
    <property type="match status" value="1"/>
</dbReference>
<dbReference type="PANTHER" id="PTHR42865">
    <property type="entry name" value="PROTON/GLUTAMATE-ASPARTATE SYMPORTER"/>
    <property type="match status" value="1"/>
</dbReference>
<dbReference type="PANTHER" id="PTHR42865:SF8">
    <property type="entry name" value="SERINE_THREONINE TRANSPORTER SSTT"/>
    <property type="match status" value="1"/>
</dbReference>
<dbReference type="Pfam" id="PF00375">
    <property type="entry name" value="SDF"/>
    <property type="match status" value="1"/>
</dbReference>
<dbReference type="PRINTS" id="PR00173">
    <property type="entry name" value="EDTRNSPORT"/>
</dbReference>
<dbReference type="SUPFAM" id="SSF118215">
    <property type="entry name" value="Proton glutamate symport protein"/>
    <property type="match status" value="1"/>
</dbReference>
<name>SSTT_AERHH</name>
<keyword id="KW-0029">Amino-acid transport</keyword>
<keyword id="KW-0997">Cell inner membrane</keyword>
<keyword id="KW-1003">Cell membrane</keyword>
<keyword id="KW-0472">Membrane</keyword>
<keyword id="KW-1185">Reference proteome</keyword>
<keyword id="KW-0769">Symport</keyword>
<keyword id="KW-0812">Transmembrane</keyword>
<keyword id="KW-1133">Transmembrane helix</keyword>
<keyword id="KW-0813">Transport</keyword>
<sequence length="416" mass="43162">MTQQHPLVRLVNSTSLVSQILVGLVFGILLAMFMPEWAKTAGLLGSLFVGALKAVAPLLVFVLVMAAIIGHKQGQKTNMKPILLLYLLGTFLAAAVAVVASFLFPSNLHLVANSAEITPPGGITEVLQTLLFNVVTNPVKALLDANYIGILAWAIGLGIAMRHASEGTKAVITDLSHGVSTIVKAVIRCAPLGILGLVASTLAETGFDALFGYAQLLVVLIGCMLFIAFVVNPLIVFWKIKRNPYPLVLTCLKESGVTAFFTRSSAANIPVNMALAEKLRLPEDTYAVSIPLGATINMAGAAITITVLSMAAVHTLGMEVDLATAILLSVVATISACGASGVAGGSLLLIPLACSLFGISNDIAMQVVAVGFIIGVLQDSAETALNSSTDVLFTAAACMAEDETLLDAAPVPNSEA</sequence>
<protein>
    <recommendedName>
        <fullName evidence="1">Serine/threonine transporter SstT</fullName>
    </recommendedName>
    <alternativeName>
        <fullName evidence="1">Na(+)/serine-threonine symporter</fullName>
    </alternativeName>
</protein>
<organism>
    <name type="scientific">Aeromonas hydrophila subsp. hydrophila (strain ATCC 7966 / DSM 30187 / BCRC 13018 / CCUG 14551 / JCM 1027 / KCTC 2358 / NCIMB 9240 / NCTC 8049)</name>
    <dbReference type="NCBI Taxonomy" id="380703"/>
    <lineage>
        <taxon>Bacteria</taxon>
        <taxon>Pseudomonadati</taxon>
        <taxon>Pseudomonadota</taxon>
        <taxon>Gammaproteobacteria</taxon>
        <taxon>Aeromonadales</taxon>
        <taxon>Aeromonadaceae</taxon>
        <taxon>Aeromonas</taxon>
    </lineage>
</organism>
<reference key="1">
    <citation type="journal article" date="2006" name="J. Bacteriol.">
        <title>Genome sequence of Aeromonas hydrophila ATCC 7966T: jack of all trades.</title>
        <authorList>
            <person name="Seshadri R."/>
            <person name="Joseph S.W."/>
            <person name="Chopra A.K."/>
            <person name="Sha J."/>
            <person name="Shaw J."/>
            <person name="Graf J."/>
            <person name="Haft D.H."/>
            <person name="Wu M."/>
            <person name="Ren Q."/>
            <person name="Rosovitz M.J."/>
            <person name="Madupu R."/>
            <person name="Tallon L."/>
            <person name="Kim M."/>
            <person name="Jin S."/>
            <person name="Vuong H."/>
            <person name="Stine O.C."/>
            <person name="Ali A."/>
            <person name="Horneman A.J."/>
            <person name="Heidelberg J.F."/>
        </authorList>
    </citation>
    <scope>NUCLEOTIDE SEQUENCE [LARGE SCALE GENOMIC DNA]</scope>
    <source>
        <strain>ATCC 7966 / DSM 30187 / BCRC 13018 / CCUG 14551 / JCM 1027 / KCTC 2358 / NCIMB 9240 / NCTC 8049</strain>
    </source>
</reference>
<feature type="chain" id="PRO_0000309073" description="Serine/threonine transporter SstT">
    <location>
        <begin position="1"/>
        <end position="416"/>
    </location>
</feature>
<feature type="transmembrane region" description="Helical" evidence="1">
    <location>
        <begin position="15"/>
        <end position="35"/>
    </location>
</feature>
<feature type="transmembrane region" description="Helical" evidence="1">
    <location>
        <begin position="49"/>
        <end position="69"/>
    </location>
</feature>
<feature type="transmembrane region" description="Helical" evidence="1">
    <location>
        <begin position="82"/>
        <end position="102"/>
    </location>
</feature>
<feature type="transmembrane region" description="Helical" evidence="1">
    <location>
        <begin position="141"/>
        <end position="161"/>
    </location>
</feature>
<feature type="transmembrane region" description="Helical" evidence="1">
    <location>
        <begin position="192"/>
        <end position="212"/>
    </location>
</feature>
<feature type="transmembrane region" description="Helical" evidence="1">
    <location>
        <begin position="217"/>
        <end position="237"/>
    </location>
</feature>
<feature type="transmembrane region" description="Helical" evidence="1">
    <location>
        <begin position="288"/>
        <end position="308"/>
    </location>
</feature>
<feature type="transmembrane region" description="Helical" evidence="1">
    <location>
        <begin position="316"/>
        <end position="336"/>
    </location>
</feature>
<feature type="transmembrane region" description="Helical" evidence="1">
    <location>
        <begin position="363"/>
        <end position="383"/>
    </location>
</feature>
<comment type="function">
    <text evidence="1">Involved in the import of serine and threonine into the cell, with the concomitant import of sodium (symport system).</text>
</comment>
<comment type="catalytic activity">
    <reaction evidence="1">
        <text>L-serine(in) + Na(+)(in) = L-serine(out) + Na(+)(out)</text>
        <dbReference type="Rhea" id="RHEA:29575"/>
        <dbReference type="ChEBI" id="CHEBI:29101"/>
        <dbReference type="ChEBI" id="CHEBI:33384"/>
    </reaction>
    <physiologicalReaction direction="right-to-left" evidence="1">
        <dbReference type="Rhea" id="RHEA:29577"/>
    </physiologicalReaction>
</comment>
<comment type="catalytic activity">
    <reaction evidence="1">
        <text>L-threonine(in) + Na(+)(in) = L-threonine(out) + Na(+)(out)</text>
        <dbReference type="Rhea" id="RHEA:69999"/>
        <dbReference type="ChEBI" id="CHEBI:29101"/>
        <dbReference type="ChEBI" id="CHEBI:57926"/>
    </reaction>
    <physiologicalReaction direction="right-to-left" evidence="1">
        <dbReference type="Rhea" id="RHEA:70001"/>
    </physiologicalReaction>
</comment>
<comment type="subcellular location">
    <subcellularLocation>
        <location evidence="1">Cell inner membrane</location>
        <topology evidence="1">Multi-pass membrane protein</topology>
    </subcellularLocation>
</comment>
<comment type="similarity">
    <text evidence="1">Belongs to the dicarboxylate/amino acid:cation symporter (DAACS) (TC 2.A.23) family.</text>
</comment>
<proteinExistence type="inferred from homology"/>